<comment type="function">
    <text evidence="1">Cell wall formation. Catalyzes the addition of glutamate to the nucleotide precursor UDP-N-acetylmuramoyl-L-alanine (UMA).</text>
</comment>
<comment type="catalytic activity">
    <reaction evidence="1">
        <text>UDP-N-acetyl-alpha-D-muramoyl-L-alanine + D-glutamate + ATP = UDP-N-acetyl-alpha-D-muramoyl-L-alanyl-D-glutamate + ADP + phosphate + H(+)</text>
        <dbReference type="Rhea" id="RHEA:16429"/>
        <dbReference type="ChEBI" id="CHEBI:15378"/>
        <dbReference type="ChEBI" id="CHEBI:29986"/>
        <dbReference type="ChEBI" id="CHEBI:30616"/>
        <dbReference type="ChEBI" id="CHEBI:43474"/>
        <dbReference type="ChEBI" id="CHEBI:83898"/>
        <dbReference type="ChEBI" id="CHEBI:83900"/>
        <dbReference type="ChEBI" id="CHEBI:456216"/>
        <dbReference type="EC" id="6.3.2.9"/>
    </reaction>
</comment>
<comment type="pathway">
    <text evidence="1">Cell wall biogenesis; peptidoglycan biosynthesis.</text>
</comment>
<comment type="subcellular location">
    <subcellularLocation>
        <location evidence="1">Cytoplasm</location>
    </subcellularLocation>
</comment>
<comment type="similarity">
    <text evidence="1">Belongs to the MurCDEF family.</text>
</comment>
<name>MURD_SYNE7</name>
<reference key="1">
    <citation type="submission" date="2005-08" db="EMBL/GenBank/DDBJ databases">
        <title>Complete sequence of chromosome 1 of Synechococcus elongatus PCC 7942.</title>
        <authorList>
            <consortium name="US DOE Joint Genome Institute"/>
            <person name="Copeland A."/>
            <person name="Lucas S."/>
            <person name="Lapidus A."/>
            <person name="Barry K."/>
            <person name="Detter J.C."/>
            <person name="Glavina T."/>
            <person name="Hammon N."/>
            <person name="Israni S."/>
            <person name="Pitluck S."/>
            <person name="Schmutz J."/>
            <person name="Larimer F."/>
            <person name="Land M."/>
            <person name="Kyrpides N."/>
            <person name="Lykidis A."/>
            <person name="Golden S."/>
            <person name="Richardson P."/>
        </authorList>
    </citation>
    <scope>NUCLEOTIDE SEQUENCE [LARGE SCALE GENOMIC DNA]</scope>
    <source>
        <strain>ATCC 33912 / PCC 7942 / FACHB-805</strain>
    </source>
</reference>
<dbReference type="EC" id="6.3.2.9" evidence="1"/>
<dbReference type="EMBL" id="CP000100">
    <property type="protein sequence ID" value="ABB57697.1"/>
    <property type="molecule type" value="Genomic_DNA"/>
</dbReference>
<dbReference type="RefSeq" id="WP_011244732.1">
    <property type="nucleotide sequence ID" value="NZ_JACJTX010000001.1"/>
</dbReference>
<dbReference type="SMR" id="Q31MM2"/>
<dbReference type="STRING" id="1140.Synpcc7942_1667"/>
<dbReference type="PaxDb" id="1140-Synpcc7942_1667"/>
<dbReference type="GeneID" id="72430537"/>
<dbReference type="KEGG" id="syf:Synpcc7942_1667"/>
<dbReference type="eggNOG" id="COG0771">
    <property type="taxonomic scope" value="Bacteria"/>
</dbReference>
<dbReference type="HOGENOM" id="CLU_032540_0_0_3"/>
<dbReference type="OrthoDB" id="9809796at2"/>
<dbReference type="BioCyc" id="SYNEL:SYNPCC7942_1667-MONOMER"/>
<dbReference type="UniPathway" id="UPA00219"/>
<dbReference type="Proteomes" id="UP000889800">
    <property type="component" value="Chromosome"/>
</dbReference>
<dbReference type="GO" id="GO:0005737">
    <property type="term" value="C:cytoplasm"/>
    <property type="evidence" value="ECO:0007669"/>
    <property type="project" value="UniProtKB-SubCell"/>
</dbReference>
<dbReference type="GO" id="GO:0005524">
    <property type="term" value="F:ATP binding"/>
    <property type="evidence" value="ECO:0007669"/>
    <property type="project" value="UniProtKB-UniRule"/>
</dbReference>
<dbReference type="GO" id="GO:0008764">
    <property type="term" value="F:UDP-N-acetylmuramoylalanine-D-glutamate ligase activity"/>
    <property type="evidence" value="ECO:0007669"/>
    <property type="project" value="UniProtKB-UniRule"/>
</dbReference>
<dbReference type="GO" id="GO:0051301">
    <property type="term" value="P:cell division"/>
    <property type="evidence" value="ECO:0007669"/>
    <property type="project" value="UniProtKB-KW"/>
</dbReference>
<dbReference type="GO" id="GO:0071555">
    <property type="term" value="P:cell wall organization"/>
    <property type="evidence" value="ECO:0007669"/>
    <property type="project" value="UniProtKB-KW"/>
</dbReference>
<dbReference type="GO" id="GO:0009252">
    <property type="term" value="P:peptidoglycan biosynthetic process"/>
    <property type="evidence" value="ECO:0007669"/>
    <property type="project" value="UniProtKB-UniRule"/>
</dbReference>
<dbReference type="GO" id="GO:0008360">
    <property type="term" value="P:regulation of cell shape"/>
    <property type="evidence" value="ECO:0007669"/>
    <property type="project" value="UniProtKB-KW"/>
</dbReference>
<dbReference type="Gene3D" id="3.90.190.20">
    <property type="entry name" value="Mur ligase, C-terminal domain"/>
    <property type="match status" value="1"/>
</dbReference>
<dbReference type="Gene3D" id="3.40.1190.10">
    <property type="entry name" value="Mur-like, catalytic domain"/>
    <property type="match status" value="1"/>
</dbReference>
<dbReference type="Gene3D" id="3.40.50.720">
    <property type="entry name" value="NAD(P)-binding Rossmann-like Domain"/>
    <property type="match status" value="1"/>
</dbReference>
<dbReference type="HAMAP" id="MF_00639">
    <property type="entry name" value="MurD"/>
    <property type="match status" value="1"/>
</dbReference>
<dbReference type="InterPro" id="IPR036565">
    <property type="entry name" value="Mur-like_cat_sf"/>
</dbReference>
<dbReference type="InterPro" id="IPR004101">
    <property type="entry name" value="Mur_ligase_C"/>
</dbReference>
<dbReference type="InterPro" id="IPR036615">
    <property type="entry name" value="Mur_ligase_C_dom_sf"/>
</dbReference>
<dbReference type="InterPro" id="IPR013221">
    <property type="entry name" value="Mur_ligase_cen"/>
</dbReference>
<dbReference type="InterPro" id="IPR005762">
    <property type="entry name" value="MurD"/>
</dbReference>
<dbReference type="NCBIfam" id="TIGR01087">
    <property type="entry name" value="murD"/>
    <property type="match status" value="1"/>
</dbReference>
<dbReference type="PANTHER" id="PTHR43692">
    <property type="entry name" value="UDP-N-ACETYLMURAMOYLALANINE--D-GLUTAMATE LIGASE"/>
    <property type="match status" value="1"/>
</dbReference>
<dbReference type="PANTHER" id="PTHR43692:SF1">
    <property type="entry name" value="UDP-N-ACETYLMURAMOYLALANINE--D-GLUTAMATE LIGASE"/>
    <property type="match status" value="1"/>
</dbReference>
<dbReference type="Pfam" id="PF02875">
    <property type="entry name" value="Mur_ligase_C"/>
    <property type="match status" value="1"/>
</dbReference>
<dbReference type="Pfam" id="PF08245">
    <property type="entry name" value="Mur_ligase_M"/>
    <property type="match status" value="1"/>
</dbReference>
<dbReference type="Pfam" id="PF21799">
    <property type="entry name" value="MurD-like_N"/>
    <property type="match status" value="1"/>
</dbReference>
<dbReference type="SUPFAM" id="SSF51984">
    <property type="entry name" value="MurCD N-terminal domain"/>
    <property type="match status" value="1"/>
</dbReference>
<dbReference type="SUPFAM" id="SSF53623">
    <property type="entry name" value="MurD-like peptide ligases, catalytic domain"/>
    <property type="match status" value="1"/>
</dbReference>
<dbReference type="SUPFAM" id="SSF53244">
    <property type="entry name" value="MurD-like peptide ligases, peptide-binding domain"/>
    <property type="match status" value="1"/>
</dbReference>
<sequence length="463" mass="50225">MQHAHVIGLGKSGCAAALLLRQQGWQVELSDRNAVAAPPELVSQGVQFRLGESLDPVAWGWQTPEQRPNCIVVSPGVPWDLPGLRQAAEELQIETLGELELAWRTLSDIPWVAVTGTNGKTTTTALIAAIFERAGLQAPACGNIGFAACEVARQQQQGEAKPLDWVIAEASSYQIEAAATLAATIGLWTTFTPDHLNRHYTLENYFTIKASLLDRAQQQVLNGDDPYLRNQANATSRWPLAFWTSTQGAEALPTSRDRGFWIEEGWVIDRGDRLFPVERFSMVGNHNQQNLLMAVAAARLAGIEAEAIAEAMANFPGIAHRLERVATWQGIELINDSKATNYDAAWVGLQAVPGPTILIAGGEAKQGDDQAWLDLIQAKARAVLLIGSAAPLFARRLAEVGYSSPVENAETLDRAVPRAVELAQSLDASHVLLSPACASFDQYPNFEARGDHFRRCAQAIAKG</sequence>
<gene>
    <name evidence="1" type="primary">murD</name>
    <name type="ordered locus">Synpcc7942_1667</name>
</gene>
<protein>
    <recommendedName>
        <fullName evidence="1">UDP-N-acetylmuramoylalanine--D-glutamate ligase</fullName>
        <ecNumber evidence="1">6.3.2.9</ecNumber>
    </recommendedName>
    <alternativeName>
        <fullName evidence="1">D-glutamic acid-adding enzyme</fullName>
    </alternativeName>
    <alternativeName>
        <fullName evidence="1">UDP-N-acetylmuramoyl-L-alanyl-D-glutamate synthetase</fullName>
    </alternativeName>
</protein>
<organism>
    <name type="scientific">Synechococcus elongatus (strain ATCC 33912 / PCC 7942 / FACHB-805)</name>
    <name type="common">Anacystis nidulans R2</name>
    <dbReference type="NCBI Taxonomy" id="1140"/>
    <lineage>
        <taxon>Bacteria</taxon>
        <taxon>Bacillati</taxon>
        <taxon>Cyanobacteriota</taxon>
        <taxon>Cyanophyceae</taxon>
        <taxon>Synechococcales</taxon>
        <taxon>Synechococcaceae</taxon>
        <taxon>Synechococcus</taxon>
    </lineage>
</organism>
<proteinExistence type="inferred from homology"/>
<accession>Q31MM2</accession>
<keyword id="KW-0067">ATP-binding</keyword>
<keyword id="KW-0131">Cell cycle</keyword>
<keyword id="KW-0132">Cell division</keyword>
<keyword id="KW-0133">Cell shape</keyword>
<keyword id="KW-0961">Cell wall biogenesis/degradation</keyword>
<keyword id="KW-0963">Cytoplasm</keyword>
<keyword id="KW-0436">Ligase</keyword>
<keyword id="KW-0547">Nucleotide-binding</keyword>
<keyword id="KW-0573">Peptidoglycan synthesis</keyword>
<keyword id="KW-1185">Reference proteome</keyword>
<feature type="chain" id="PRO_0000257256" description="UDP-N-acetylmuramoylalanine--D-glutamate ligase">
    <location>
        <begin position="1"/>
        <end position="463"/>
    </location>
</feature>
<feature type="binding site" evidence="1">
    <location>
        <begin position="116"/>
        <end position="122"/>
    </location>
    <ligand>
        <name>ATP</name>
        <dbReference type="ChEBI" id="CHEBI:30616"/>
    </ligand>
</feature>
<evidence type="ECO:0000255" key="1">
    <source>
        <dbReference type="HAMAP-Rule" id="MF_00639"/>
    </source>
</evidence>